<keyword id="KW-0067">ATP-binding</keyword>
<keyword id="KW-0119">Carbohydrate metabolism</keyword>
<keyword id="KW-0418">Kinase</keyword>
<keyword id="KW-0547">Nucleotide-binding</keyword>
<keyword id="KW-1185">Reference proteome</keyword>
<keyword id="KW-0808">Transferase</keyword>
<name>ANMK_PICP2</name>
<dbReference type="EC" id="2.7.1.170" evidence="1"/>
<dbReference type="EMBL" id="CP000951">
    <property type="protein sequence ID" value="ACB00759.1"/>
    <property type="molecule type" value="Genomic_DNA"/>
</dbReference>
<dbReference type="RefSeq" id="WP_012308377.1">
    <property type="nucleotide sequence ID" value="NZ_JAHHPU010000014.1"/>
</dbReference>
<dbReference type="SMR" id="B1XMP0"/>
<dbReference type="STRING" id="32049.SYNPCC7002_A2790"/>
<dbReference type="KEGG" id="syp:SYNPCC7002_A2790"/>
<dbReference type="eggNOG" id="COG2377">
    <property type="taxonomic scope" value="Bacteria"/>
</dbReference>
<dbReference type="HOGENOM" id="CLU_038782_1_0_3"/>
<dbReference type="UniPathway" id="UPA00343"/>
<dbReference type="UniPathway" id="UPA00544"/>
<dbReference type="Proteomes" id="UP000001688">
    <property type="component" value="Chromosome"/>
</dbReference>
<dbReference type="GO" id="GO:0005524">
    <property type="term" value="F:ATP binding"/>
    <property type="evidence" value="ECO:0007669"/>
    <property type="project" value="UniProtKB-UniRule"/>
</dbReference>
<dbReference type="GO" id="GO:0016301">
    <property type="term" value="F:kinase activity"/>
    <property type="evidence" value="ECO:0007669"/>
    <property type="project" value="UniProtKB-KW"/>
</dbReference>
<dbReference type="GO" id="GO:0016773">
    <property type="term" value="F:phosphotransferase activity, alcohol group as acceptor"/>
    <property type="evidence" value="ECO:0007669"/>
    <property type="project" value="UniProtKB-UniRule"/>
</dbReference>
<dbReference type="GO" id="GO:0097175">
    <property type="term" value="P:1,6-anhydro-N-acetyl-beta-muramic acid catabolic process"/>
    <property type="evidence" value="ECO:0007669"/>
    <property type="project" value="UniProtKB-UniRule"/>
</dbReference>
<dbReference type="GO" id="GO:0006040">
    <property type="term" value="P:amino sugar metabolic process"/>
    <property type="evidence" value="ECO:0007669"/>
    <property type="project" value="InterPro"/>
</dbReference>
<dbReference type="GO" id="GO:0009254">
    <property type="term" value="P:peptidoglycan turnover"/>
    <property type="evidence" value="ECO:0007669"/>
    <property type="project" value="UniProtKB-UniRule"/>
</dbReference>
<dbReference type="CDD" id="cd24050">
    <property type="entry name" value="ASKHA_NBD_ANMK"/>
    <property type="match status" value="1"/>
</dbReference>
<dbReference type="Gene3D" id="3.30.420.40">
    <property type="match status" value="2"/>
</dbReference>
<dbReference type="HAMAP" id="MF_01270">
    <property type="entry name" value="AnhMurNAc_kinase"/>
    <property type="match status" value="1"/>
</dbReference>
<dbReference type="InterPro" id="IPR005338">
    <property type="entry name" value="Anhydro_N_Ac-Mur_kinase"/>
</dbReference>
<dbReference type="InterPro" id="IPR043129">
    <property type="entry name" value="ATPase_NBD"/>
</dbReference>
<dbReference type="NCBIfam" id="NF007143">
    <property type="entry name" value="PRK09585.2-2"/>
    <property type="match status" value="1"/>
</dbReference>
<dbReference type="NCBIfam" id="NF007148">
    <property type="entry name" value="PRK09585.3-2"/>
    <property type="match status" value="1"/>
</dbReference>
<dbReference type="PANTHER" id="PTHR30605">
    <property type="entry name" value="ANHYDRO-N-ACETYLMURAMIC ACID KINASE"/>
    <property type="match status" value="1"/>
</dbReference>
<dbReference type="PANTHER" id="PTHR30605:SF0">
    <property type="entry name" value="ANHYDRO-N-ACETYLMURAMIC ACID KINASE"/>
    <property type="match status" value="1"/>
</dbReference>
<dbReference type="Pfam" id="PF03702">
    <property type="entry name" value="AnmK"/>
    <property type="match status" value="1"/>
</dbReference>
<dbReference type="SUPFAM" id="SSF53067">
    <property type="entry name" value="Actin-like ATPase domain"/>
    <property type="match status" value="1"/>
</dbReference>
<gene>
    <name evidence="1" type="primary">anmK</name>
    <name type="ordered locus">SYNPCC7002_A2790</name>
</gene>
<sequence>MRVIGLMSGTSVDGIDAALVEIQGEADAIEIELLGFTTYSYPSKLREKILAVCAGEKLSALEFAALDDEIAHSFATAARQLQERYGKAELIGSHGQTIFHRPPNGNLGLSWQLGRGEAIAQQTKLKTVSNFRRADLAAGGQGAPLVPKVDAYLLADPTKHRCIQNLGGIGNVTYLPPKNQTDWENYVIGWDTGPGNVLLDLAIQKLTNGAQAYDQDGIWASQGTPHLDLVERWLADPFIEQLPPKSTGREYFGVDFLEQCWRDAQDLQLSEADWLASLTEFTALTVQRNYELFLPQLPDEIFLCGGGCRNSYLRKRLQAAFGNQIPVRSTDDLGLNHDAKEAIAFAVLAYWRIKEFPGNLPKVTGAPCPVLLGEIHCPY</sequence>
<feature type="chain" id="PRO_1000214174" description="Anhydro-N-acetylmuramic acid kinase">
    <location>
        <begin position="1"/>
        <end position="379"/>
    </location>
</feature>
<feature type="binding site" evidence="1">
    <location>
        <begin position="9"/>
        <end position="16"/>
    </location>
    <ligand>
        <name>ATP</name>
        <dbReference type="ChEBI" id="CHEBI:30616"/>
    </ligand>
</feature>
<comment type="function">
    <text evidence="1">Catalyzes the specific phosphorylation of 1,6-anhydro-N-acetylmuramic acid (anhMurNAc) with the simultaneous cleavage of the 1,6-anhydro ring, generating MurNAc-6-P. Is required for the utilization of anhMurNAc either imported from the medium or derived from its own cell wall murein, and thus plays a role in cell wall recycling.</text>
</comment>
<comment type="catalytic activity">
    <reaction evidence="1">
        <text>1,6-anhydro-N-acetyl-beta-muramate + ATP + H2O = N-acetyl-D-muramate 6-phosphate + ADP + H(+)</text>
        <dbReference type="Rhea" id="RHEA:24952"/>
        <dbReference type="ChEBI" id="CHEBI:15377"/>
        <dbReference type="ChEBI" id="CHEBI:15378"/>
        <dbReference type="ChEBI" id="CHEBI:30616"/>
        <dbReference type="ChEBI" id="CHEBI:58690"/>
        <dbReference type="ChEBI" id="CHEBI:58722"/>
        <dbReference type="ChEBI" id="CHEBI:456216"/>
        <dbReference type="EC" id="2.7.1.170"/>
    </reaction>
</comment>
<comment type="pathway">
    <text evidence="1">Amino-sugar metabolism; 1,6-anhydro-N-acetylmuramate degradation.</text>
</comment>
<comment type="pathway">
    <text evidence="1">Cell wall biogenesis; peptidoglycan recycling.</text>
</comment>
<comment type="similarity">
    <text evidence="1">Belongs to the anhydro-N-acetylmuramic acid kinase family.</text>
</comment>
<protein>
    <recommendedName>
        <fullName evidence="1">Anhydro-N-acetylmuramic acid kinase</fullName>
        <ecNumber evidence="1">2.7.1.170</ecNumber>
    </recommendedName>
    <alternativeName>
        <fullName evidence="1">AnhMurNAc kinase</fullName>
    </alternativeName>
</protein>
<reference key="1">
    <citation type="submission" date="2008-02" db="EMBL/GenBank/DDBJ databases">
        <title>Complete sequence of Synechococcus sp. PCC 7002.</title>
        <authorList>
            <person name="Li T."/>
            <person name="Zhao J."/>
            <person name="Zhao C."/>
            <person name="Liu Z."/>
            <person name="Zhao F."/>
            <person name="Marquardt J."/>
            <person name="Nomura C.T."/>
            <person name="Persson S."/>
            <person name="Detter J.C."/>
            <person name="Richardson P.M."/>
            <person name="Lanz C."/>
            <person name="Schuster S.C."/>
            <person name="Wang J."/>
            <person name="Li S."/>
            <person name="Huang X."/>
            <person name="Cai T."/>
            <person name="Yu Z."/>
            <person name="Luo J."/>
            <person name="Zhao J."/>
            <person name="Bryant D.A."/>
        </authorList>
    </citation>
    <scope>NUCLEOTIDE SEQUENCE [LARGE SCALE GENOMIC DNA]</scope>
    <source>
        <strain>ATCC 27264 / PCC 7002 / PR-6</strain>
    </source>
</reference>
<organism>
    <name type="scientific">Picosynechococcus sp. (strain ATCC 27264 / PCC 7002 / PR-6)</name>
    <name type="common">Agmenellum quadruplicatum</name>
    <dbReference type="NCBI Taxonomy" id="32049"/>
    <lineage>
        <taxon>Bacteria</taxon>
        <taxon>Bacillati</taxon>
        <taxon>Cyanobacteriota</taxon>
        <taxon>Cyanophyceae</taxon>
        <taxon>Oscillatoriophycideae</taxon>
        <taxon>Chroococcales</taxon>
        <taxon>Geminocystaceae</taxon>
        <taxon>Picosynechococcus</taxon>
    </lineage>
</organism>
<accession>B1XMP0</accession>
<evidence type="ECO:0000255" key="1">
    <source>
        <dbReference type="HAMAP-Rule" id="MF_01270"/>
    </source>
</evidence>
<proteinExistence type="inferred from homology"/>